<name>KPPR_ECOLI</name>
<dbReference type="EC" id="2.7.1.19"/>
<dbReference type="EMBL" id="U18997">
    <property type="protein sequence ID" value="AAA58152.1"/>
    <property type="status" value="ALT_FRAME"/>
    <property type="molecule type" value="Genomic_DNA"/>
</dbReference>
<dbReference type="EMBL" id="U00096">
    <property type="protein sequence ID" value="AAC76380.1"/>
    <property type="molecule type" value="Genomic_DNA"/>
</dbReference>
<dbReference type="EMBL" id="AP009048">
    <property type="protein sequence ID" value="BAE77935.1"/>
    <property type="molecule type" value="Genomic_DNA"/>
</dbReference>
<dbReference type="EMBL" id="X61919">
    <property type="status" value="NOT_ANNOTATED_CDS"/>
    <property type="molecule type" value="Genomic_DNA"/>
</dbReference>
<dbReference type="PIR" id="F65129">
    <property type="entry name" value="F65129"/>
</dbReference>
<dbReference type="RefSeq" id="NP_417814.1">
    <property type="nucleotide sequence ID" value="NC_000913.3"/>
</dbReference>
<dbReference type="RefSeq" id="WP_001274680.1">
    <property type="nucleotide sequence ID" value="NZ_STEB01000004.1"/>
</dbReference>
<dbReference type="SMR" id="P0AEX5"/>
<dbReference type="BioGRID" id="4259590">
    <property type="interactions" value="27"/>
</dbReference>
<dbReference type="DIP" id="DIP-10565N"/>
<dbReference type="FunCoup" id="P0AEX5">
    <property type="interactions" value="151"/>
</dbReference>
<dbReference type="IntAct" id="P0AEX5">
    <property type="interactions" value="4"/>
</dbReference>
<dbReference type="STRING" id="511145.b3355"/>
<dbReference type="jPOST" id="P0AEX5"/>
<dbReference type="PaxDb" id="511145-b3355"/>
<dbReference type="EnsemblBacteria" id="AAC76380">
    <property type="protein sequence ID" value="AAC76380"/>
    <property type="gene ID" value="b3355"/>
</dbReference>
<dbReference type="GeneID" id="947862"/>
<dbReference type="KEGG" id="ecj:JW3318"/>
<dbReference type="KEGG" id="eco:b3355"/>
<dbReference type="KEGG" id="ecoc:C3026_18220"/>
<dbReference type="PATRIC" id="fig|1411691.4.peg.3375"/>
<dbReference type="EchoBASE" id="EB2268"/>
<dbReference type="eggNOG" id="COG3954">
    <property type="taxonomic scope" value="Bacteria"/>
</dbReference>
<dbReference type="HOGENOM" id="CLU_962223_0_0_6"/>
<dbReference type="InParanoid" id="P0AEX5"/>
<dbReference type="OMA" id="MDDYINH"/>
<dbReference type="OrthoDB" id="9773443at2"/>
<dbReference type="PhylomeDB" id="P0AEX5"/>
<dbReference type="BioCyc" id="EcoCyc:EG12365-MONOMER"/>
<dbReference type="PRO" id="PR:P0AEX5"/>
<dbReference type="Proteomes" id="UP000000625">
    <property type="component" value="Chromosome"/>
</dbReference>
<dbReference type="GO" id="GO:0005737">
    <property type="term" value="C:cytoplasm"/>
    <property type="evidence" value="ECO:0000318"/>
    <property type="project" value="GO_Central"/>
</dbReference>
<dbReference type="GO" id="GO:0005524">
    <property type="term" value="F:ATP binding"/>
    <property type="evidence" value="ECO:0007669"/>
    <property type="project" value="UniProtKB-KW"/>
</dbReference>
<dbReference type="GO" id="GO:0008974">
    <property type="term" value="F:phosphoribulokinase activity"/>
    <property type="evidence" value="ECO:0007669"/>
    <property type="project" value="UniProtKB-EC"/>
</dbReference>
<dbReference type="GO" id="GO:0005975">
    <property type="term" value="P:carbohydrate metabolic process"/>
    <property type="evidence" value="ECO:0007669"/>
    <property type="project" value="InterPro"/>
</dbReference>
<dbReference type="CDD" id="cd02029">
    <property type="entry name" value="PRK_like"/>
    <property type="match status" value="1"/>
</dbReference>
<dbReference type="FunFam" id="3.40.50.300:FF:000307">
    <property type="entry name" value="Phosphoribulokinase"/>
    <property type="match status" value="1"/>
</dbReference>
<dbReference type="Gene3D" id="3.40.50.300">
    <property type="entry name" value="P-loop containing nucleotide triphosphate hydrolases"/>
    <property type="match status" value="1"/>
</dbReference>
<dbReference type="InterPro" id="IPR027417">
    <property type="entry name" value="P-loop_NTPase"/>
</dbReference>
<dbReference type="InterPro" id="IPR006082">
    <property type="entry name" value="PRK"/>
</dbReference>
<dbReference type="InterPro" id="IPR006083">
    <property type="entry name" value="PRK/URK"/>
</dbReference>
<dbReference type="NCBIfam" id="NF011997">
    <property type="entry name" value="PRK15453.1"/>
    <property type="match status" value="1"/>
</dbReference>
<dbReference type="Pfam" id="PF00485">
    <property type="entry name" value="PRK"/>
    <property type="match status" value="1"/>
</dbReference>
<dbReference type="PRINTS" id="PR00478">
    <property type="entry name" value="PHRIBLKINASE"/>
</dbReference>
<dbReference type="SUPFAM" id="SSF52540">
    <property type="entry name" value="P-loop containing nucleoside triphosphate hydrolases"/>
    <property type="match status" value="1"/>
</dbReference>
<dbReference type="PROSITE" id="PS00567">
    <property type="entry name" value="PHOSPHORIBULOKINASE"/>
    <property type="match status" value="1"/>
</dbReference>
<keyword id="KW-0067">ATP-binding</keyword>
<keyword id="KW-0418">Kinase</keyword>
<keyword id="KW-0547">Nucleotide-binding</keyword>
<keyword id="KW-1185">Reference proteome</keyword>
<keyword id="KW-0808">Transferase</keyword>
<comment type="catalytic activity">
    <reaction>
        <text>D-ribulose 5-phosphate + ATP = D-ribulose 1,5-bisphosphate + ADP + H(+)</text>
        <dbReference type="Rhea" id="RHEA:19365"/>
        <dbReference type="ChEBI" id="CHEBI:15378"/>
        <dbReference type="ChEBI" id="CHEBI:30616"/>
        <dbReference type="ChEBI" id="CHEBI:57870"/>
        <dbReference type="ChEBI" id="CHEBI:58121"/>
        <dbReference type="ChEBI" id="CHEBI:456216"/>
        <dbReference type="EC" id="2.7.1.19"/>
    </reaction>
</comment>
<comment type="similarity">
    <text evidence="2">Belongs to the phosphoribulokinase family.</text>
</comment>
<reference key="1">
    <citation type="journal article" date="1997" name="Science">
        <title>The complete genome sequence of Escherichia coli K-12.</title>
        <authorList>
            <person name="Blattner F.R."/>
            <person name="Plunkett G. III"/>
            <person name="Bloch C.A."/>
            <person name="Perna N.T."/>
            <person name="Burland V."/>
            <person name="Riley M."/>
            <person name="Collado-Vides J."/>
            <person name="Glasner J.D."/>
            <person name="Rode C.K."/>
            <person name="Mayhew G.F."/>
            <person name="Gregor J."/>
            <person name="Davis N.W."/>
            <person name="Kirkpatrick H.A."/>
            <person name="Goeden M.A."/>
            <person name="Rose D.J."/>
            <person name="Mau B."/>
            <person name="Shao Y."/>
        </authorList>
    </citation>
    <scope>NUCLEOTIDE SEQUENCE [LARGE SCALE GENOMIC DNA]</scope>
    <source>
        <strain>K12 / MG1655 / ATCC 47076</strain>
    </source>
</reference>
<reference key="2">
    <citation type="journal article" date="2006" name="Mol. Syst. Biol.">
        <title>Highly accurate genome sequences of Escherichia coli K-12 strains MG1655 and W3110.</title>
        <authorList>
            <person name="Hayashi K."/>
            <person name="Morooka N."/>
            <person name="Yamamoto Y."/>
            <person name="Fujita K."/>
            <person name="Isono K."/>
            <person name="Choi S."/>
            <person name="Ohtsubo E."/>
            <person name="Baba T."/>
            <person name="Wanner B.L."/>
            <person name="Mori H."/>
            <person name="Horiuchi T."/>
        </authorList>
    </citation>
    <scope>NUCLEOTIDE SEQUENCE [LARGE SCALE GENOMIC DNA]</scope>
    <source>
        <strain>K12 / W3110 / ATCC 27325 / DSM 5911</strain>
    </source>
</reference>
<reference key="3">
    <citation type="journal article" date="1991" name="Biochim. Biophys. Acta">
        <title>The nucleotide sequence of the Escherichia coli crp divergent RNA and an overlapping ORF.</title>
        <authorList>
            <person name="Bhasin R."/>
            <person name="Freundlich M."/>
        </authorList>
    </citation>
    <scope>NUCLEOTIDE SEQUENCE [GENOMIC DNA] OF 228-289</scope>
    <source>
        <strain>K12</strain>
    </source>
</reference>
<reference key="4">
    <citation type="journal article" date="1994" name="Trends Biochem. Sci.">
        <title>New genes in old sequence: a strategy for finding genes in the bacterial genome.</title>
        <authorList>
            <person name="Borodovsky M."/>
            <person name="Koonin E.V."/>
            <person name="Rudd K.E."/>
        </authorList>
    </citation>
    <scope>IDENTIFICATION</scope>
</reference>
<reference key="5">
    <citation type="journal article" date="1994" name="Nucleic Acids Res.">
        <title>Intrinsic and extrinsic approaches for detecting genes in a bacterial genome.</title>
        <authorList>
            <person name="Borodovsky M."/>
            <person name="Rudd K.E."/>
            <person name="Koonin E.V."/>
        </authorList>
    </citation>
    <scope>IDENTIFICATION</scope>
</reference>
<reference key="6">
    <citation type="journal article" date="1994" name="Nat. Genet.">
        <title>Large scale bacterial gene discovery by similarity search.</title>
        <authorList>
            <person name="Robison K."/>
            <person name="Gilbert W."/>
            <person name="Church G.M."/>
        </authorList>
    </citation>
    <scope>IDENTIFICATION</scope>
</reference>
<gene>
    <name type="primary">prkB</name>
    <name type="synonym">yhfF</name>
    <name type="ordered locus">b3355</name>
    <name type="ordered locus">JW3318</name>
</gene>
<organism>
    <name type="scientific">Escherichia coli (strain K12)</name>
    <dbReference type="NCBI Taxonomy" id="83333"/>
    <lineage>
        <taxon>Bacteria</taxon>
        <taxon>Pseudomonadati</taxon>
        <taxon>Pseudomonadota</taxon>
        <taxon>Gammaproteobacteria</taxon>
        <taxon>Enterobacterales</taxon>
        <taxon>Enterobacteriaceae</taxon>
        <taxon>Escherichia</taxon>
    </lineage>
</organism>
<accession>P0AEX5</accession>
<accession>P37307</accession>
<accession>P76684</accession>
<accession>Q2M721</accession>
<feature type="chain" id="PRO_0000201952" description="Probable phosphoribulokinase">
    <location>
        <begin position="1"/>
        <end position="289"/>
    </location>
</feature>
<feature type="binding site" evidence="1">
    <location>
        <begin position="12"/>
        <end position="20"/>
    </location>
    <ligand>
        <name>ATP</name>
        <dbReference type="ChEBI" id="CHEBI:30616"/>
    </ligand>
</feature>
<feature type="sequence conflict" description="In Ref. 3." evidence="2" ref="3">
    <original>Q</original>
    <variation>L</variation>
    <location>
        <position position="250"/>
    </location>
</feature>
<proteinExistence type="inferred from homology"/>
<protein>
    <recommendedName>
        <fullName>Probable phosphoribulokinase</fullName>
        <shortName>PRK</shortName>
        <shortName>PRKase</shortName>
        <ecNumber>2.7.1.19</ecNumber>
    </recommendedName>
    <alternativeName>
        <fullName>Phosphopentokinase</fullName>
    </alternativeName>
</protein>
<sequence length="289" mass="32344">MSAKHPVIAVTGSSGAGTTTTSLAFRKIFAQLNLHAAEVEGDSFHRYTRPEMDMAIRKARDAGRHISYFGPEANDFGLLEQTFIEYGQSGKGKSRKYLHTYDEAVPWNQVPGTFTPWQPLPEPTDVLFYEGLHGGVVTPQHNVAQHVDLLVGVVPIVNLEWIQKLIRDTSERGHSREAVMDSVVRSMEDYINYITPQFSRTHLNFQRVPTVDTSNPFAAKGIPSLDESFVVIHFRNLEGIDFPWLLAMLQGSFISHINTLVVPGGKMGLAMELIMLPLVQRLMEGKKIE</sequence>
<evidence type="ECO:0000250" key="1"/>
<evidence type="ECO:0000305" key="2"/>